<evidence type="ECO:0000255" key="1">
    <source>
        <dbReference type="HAMAP-Rule" id="MF_00015"/>
    </source>
</evidence>
<accession>P61609</accession>
<feature type="chain" id="PRO_0000170038" description="LexA repressor 2">
    <location>
        <begin position="1"/>
        <end position="203"/>
    </location>
</feature>
<feature type="DNA-binding region" description="H-T-H motif" evidence="1">
    <location>
        <begin position="28"/>
        <end position="48"/>
    </location>
</feature>
<feature type="active site" description="For autocatalytic cleavage activity" evidence="1">
    <location>
        <position position="122"/>
    </location>
</feature>
<feature type="active site" description="For autocatalytic cleavage activity" evidence="1">
    <location>
        <position position="159"/>
    </location>
</feature>
<feature type="site" description="Cleavage; by autolysis" evidence="1">
    <location>
        <begin position="88"/>
        <end position="89"/>
    </location>
</feature>
<name>LEXA2_GEOSL</name>
<reference key="1">
    <citation type="journal article" date="2003" name="Science">
        <title>Genome of Geobacter sulfurreducens: metal reduction in subsurface environments.</title>
        <authorList>
            <person name="Methe B.A."/>
            <person name="Nelson K.E."/>
            <person name="Eisen J.A."/>
            <person name="Paulsen I.T."/>
            <person name="Nelson W.C."/>
            <person name="Heidelberg J.F."/>
            <person name="Wu D."/>
            <person name="Wu M."/>
            <person name="Ward N.L."/>
            <person name="Beanan M.J."/>
            <person name="Dodson R.J."/>
            <person name="Madupu R."/>
            <person name="Brinkac L.M."/>
            <person name="Daugherty S.C."/>
            <person name="DeBoy R.T."/>
            <person name="Durkin A.S."/>
            <person name="Gwinn M.L."/>
            <person name="Kolonay J.F."/>
            <person name="Sullivan S.A."/>
            <person name="Haft D.H."/>
            <person name="Selengut J."/>
            <person name="Davidsen T.M."/>
            <person name="Zafar N."/>
            <person name="White O."/>
            <person name="Tran B."/>
            <person name="Romero C."/>
            <person name="Forberger H.A."/>
            <person name="Weidman J.F."/>
            <person name="Khouri H.M."/>
            <person name="Feldblyum T.V."/>
            <person name="Utterback T.R."/>
            <person name="Van Aken S.E."/>
            <person name="Lovley D.R."/>
            <person name="Fraser C.M."/>
        </authorList>
    </citation>
    <scope>NUCLEOTIDE SEQUENCE [LARGE SCALE GENOMIC DNA]</scope>
    <source>
        <strain>ATCC 51573 / DSM 12127 / PCA</strain>
    </source>
</reference>
<dbReference type="EC" id="3.4.21.88" evidence="1"/>
<dbReference type="EMBL" id="AE017180">
    <property type="protein sequence ID" value="AAR34991.1"/>
    <property type="molecule type" value="Genomic_DNA"/>
</dbReference>
<dbReference type="RefSeq" id="NP_952668.1">
    <property type="nucleotide sequence ID" value="NC_002939.5"/>
</dbReference>
<dbReference type="SMR" id="P61609"/>
<dbReference type="FunCoup" id="P61609">
    <property type="interactions" value="341"/>
</dbReference>
<dbReference type="STRING" id="243231.GSU1617"/>
<dbReference type="MEROPS" id="S24.001"/>
<dbReference type="EnsemblBacteria" id="AAR34991">
    <property type="protein sequence ID" value="AAR34991"/>
    <property type="gene ID" value="GSU1617"/>
</dbReference>
<dbReference type="KEGG" id="gsu:GSU1617"/>
<dbReference type="PATRIC" id="fig|243231.5.peg.1660"/>
<dbReference type="eggNOG" id="COG1974">
    <property type="taxonomic scope" value="Bacteria"/>
</dbReference>
<dbReference type="HOGENOM" id="CLU_066192_45_1_7"/>
<dbReference type="InParanoid" id="P61609"/>
<dbReference type="OrthoDB" id="9802364at2"/>
<dbReference type="Proteomes" id="UP000000577">
    <property type="component" value="Chromosome"/>
</dbReference>
<dbReference type="CollecTF" id="EXPREG_00000ba0"/>
<dbReference type="GO" id="GO:0032993">
    <property type="term" value="C:protein-DNA complex"/>
    <property type="evidence" value="ECO:0000318"/>
    <property type="project" value="GO_Central"/>
</dbReference>
<dbReference type="GO" id="GO:0001217">
    <property type="term" value="F:DNA-binding transcription repressor activity"/>
    <property type="evidence" value="ECO:0000318"/>
    <property type="project" value="GO_Central"/>
</dbReference>
<dbReference type="GO" id="GO:0043565">
    <property type="term" value="F:sequence-specific DNA binding"/>
    <property type="evidence" value="ECO:0000318"/>
    <property type="project" value="GO_Central"/>
</dbReference>
<dbReference type="GO" id="GO:0004252">
    <property type="term" value="F:serine-type endopeptidase activity"/>
    <property type="evidence" value="ECO:0007669"/>
    <property type="project" value="UniProtKB-UniRule"/>
</dbReference>
<dbReference type="GO" id="GO:0006281">
    <property type="term" value="P:DNA repair"/>
    <property type="evidence" value="ECO:0007669"/>
    <property type="project" value="UniProtKB-UniRule"/>
</dbReference>
<dbReference type="GO" id="GO:0006260">
    <property type="term" value="P:DNA replication"/>
    <property type="evidence" value="ECO:0007669"/>
    <property type="project" value="UniProtKB-UniRule"/>
</dbReference>
<dbReference type="GO" id="GO:0045892">
    <property type="term" value="P:negative regulation of DNA-templated transcription"/>
    <property type="evidence" value="ECO:0000269"/>
    <property type="project" value="CollecTF"/>
</dbReference>
<dbReference type="GO" id="GO:0006508">
    <property type="term" value="P:proteolysis"/>
    <property type="evidence" value="ECO:0007669"/>
    <property type="project" value="InterPro"/>
</dbReference>
<dbReference type="GO" id="GO:0009432">
    <property type="term" value="P:SOS response"/>
    <property type="evidence" value="ECO:0000269"/>
    <property type="project" value="CollecTF"/>
</dbReference>
<dbReference type="CDD" id="cd06529">
    <property type="entry name" value="S24_LexA-like"/>
    <property type="match status" value="1"/>
</dbReference>
<dbReference type="FunFam" id="1.10.10.10:FF:000009">
    <property type="entry name" value="LexA repressor"/>
    <property type="match status" value="1"/>
</dbReference>
<dbReference type="FunFam" id="2.10.109.10:FF:000001">
    <property type="entry name" value="LexA repressor"/>
    <property type="match status" value="1"/>
</dbReference>
<dbReference type="Gene3D" id="2.10.109.10">
    <property type="entry name" value="Umud Fragment, subunit A"/>
    <property type="match status" value="1"/>
</dbReference>
<dbReference type="Gene3D" id="1.10.10.10">
    <property type="entry name" value="Winged helix-like DNA-binding domain superfamily/Winged helix DNA-binding domain"/>
    <property type="match status" value="1"/>
</dbReference>
<dbReference type="HAMAP" id="MF_00015">
    <property type="entry name" value="LexA"/>
    <property type="match status" value="1"/>
</dbReference>
<dbReference type="InterPro" id="IPR006200">
    <property type="entry name" value="LexA"/>
</dbReference>
<dbReference type="InterPro" id="IPR039418">
    <property type="entry name" value="LexA-like"/>
</dbReference>
<dbReference type="InterPro" id="IPR036286">
    <property type="entry name" value="LexA/Signal_pep-like_sf"/>
</dbReference>
<dbReference type="InterPro" id="IPR006199">
    <property type="entry name" value="LexA_DNA-bd_dom"/>
</dbReference>
<dbReference type="InterPro" id="IPR050077">
    <property type="entry name" value="LexA_repressor"/>
</dbReference>
<dbReference type="InterPro" id="IPR006197">
    <property type="entry name" value="Peptidase_S24_LexA"/>
</dbReference>
<dbReference type="InterPro" id="IPR015927">
    <property type="entry name" value="Peptidase_S24_S26A/B/C"/>
</dbReference>
<dbReference type="InterPro" id="IPR036388">
    <property type="entry name" value="WH-like_DNA-bd_sf"/>
</dbReference>
<dbReference type="InterPro" id="IPR036390">
    <property type="entry name" value="WH_DNA-bd_sf"/>
</dbReference>
<dbReference type="NCBIfam" id="TIGR00498">
    <property type="entry name" value="lexA"/>
    <property type="match status" value="1"/>
</dbReference>
<dbReference type="PANTHER" id="PTHR33516">
    <property type="entry name" value="LEXA REPRESSOR"/>
    <property type="match status" value="1"/>
</dbReference>
<dbReference type="PANTHER" id="PTHR33516:SF2">
    <property type="entry name" value="LEXA REPRESSOR-RELATED"/>
    <property type="match status" value="1"/>
</dbReference>
<dbReference type="Pfam" id="PF01726">
    <property type="entry name" value="LexA_DNA_bind"/>
    <property type="match status" value="1"/>
</dbReference>
<dbReference type="Pfam" id="PF00717">
    <property type="entry name" value="Peptidase_S24"/>
    <property type="match status" value="1"/>
</dbReference>
<dbReference type="PRINTS" id="PR00726">
    <property type="entry name" value="LEXASERPTASE"/>
</dbReference>
<dbReference type="SUPFAM" id="SSF51306">
    <property type="entry name" value="LexA/Signal peptidase"/>
    <property type="match status" value="1"/>
</dbReference>
<dbReference type="SUPFAM" id="SSF46785">
    <property type="entry name" value="Winged helix' DNA-binding domain"/>
    <property type="match status" value="1"/>
</dbReference>
<comment type="function">
    <text evidence="1">Represses a number of genes involved in the response to DNA damage (SOS response), including recA and lexA. In the presence of single-stranded DNA, RecA interacts with LexA causing an autocatalytic cleavage which disrupts the DNA-binding part of LexA, leading to derepression of the SOS regulon and eventually DNA repair.</text>
</comment>
<comment type="catalytic activity">
    <reaction evidence="1">
        <text>Hydrolysis of Ala-|-Gly bond in repressor LexA.</text>
        <dbReference type="EC" id="3.4.21.88"/>
    </reaction>
</comment>
<comment type="subunit">
    <text evidence="1">Homodimer.</text>
</comment>
<comment type="similarity">
    <text evidence="1">Belongs to the peptidase S24 family.</text>
</comment>
<organism>
    <name type="scientific">Geobacter sulfurreducens (strain ATCC 51573 / DSM 12127 / PCA)</name>
    <dbReference type="NCBI Taxonomy" id="243231"/>
    <lineage>
        <taxon>Bacteria</taxon>
        <taxon>Pseudomonadati</taxon>
        <taxon>Thermodesulfobacteriota</taxon>
        <taxon>Desulfuromonadia</taxon>
        <taxon>Geobacterales</taxon>
        <taxon>Geobacteraceae</taxon>
        <taxon>Geobacter</taxon>
    </lineage>
</organism>
<protein>
    <recommendedName>
        <fullName evidence="1">LexA repressor 2</fullName>
        <ecNumber evidence="1">3.4.21.88</ecNumber>
    </recommendedName>
</protein>
<proteinExistence type="inferred from homology"/>
<gene>
    <name evidence="1" type="primary">lexA2</name>
    <name type="synonym">lexA-2</name>
    <name type="ordered locus">GSU1617</name>
</gene>
<keyword id="KW-0068">Autocatalytic cleavage</keyword>
<keyword id="KW-0227">DNA damage</keyword>
<keyword id="KW-0234">DNA repair</keyword>
<keyword id="KW-0235">DNA replication</keyword>
<keyword id="KW-0238">DNA-binding</keyword>
<keyword id="KW-0378">Hydrolase</keyword>
<keyword id="KW-1185">Reference proteome</keyword>
<keyword id="KW-0678">Repressor</keyword>
<keyword id="KW-0742">SOS response</keyword>
<keyword id="KW-0804">Transcription</keyword>
<keyword id="KW-0805">Transcription regulation</keyword>
<sequence>METLTSRQRTVLEFITAHVDRHGYPPTMREIARHLNVNGTLGVAKHLEALARKGYLQREPGNSRGITLTGQTRHTPTVSLPVIGVVRAGVPQIATEEIEEHISIDQSLVKGGAFFLRVKGDSMINAAIIEGDLALVRPQQTAENRDIVVAMIDGEATLKRFYQGADHIRLQPENPNMAPIIVRSGVQEAWIIGKVVGIYRRMD</sequence>